<protein>
    <recommendedName>
        <fullName evidence="2">Ornithine carbamoyltransferase</fullName>
        <shortName evidence="2">OTCase</shortName>
        <ecNumber evidence="2">2.1.3.3</ecNumber>
    </recommendedName>
</protein>
<name>OTC_RHOP5</name>
<keyword id="KW-0028">Amino-acid biosynthesis</keyword>
<keyword id="KW-0055">Arginine biosynthesis</keyword>
<keyword id="KW-0963">Cytoplasm</keyword>
<keyword id="KW-0808">Transferase</keyword>
<proteinExistence type="inferred from homology"/>
<comment type="function">
    <text evidence="1">Reversibly catalyzes the transfer of the carbamoyl group from carbamoyl phosphate (CP) to the N(epsilon) atom of ornithine (ORN) to produce L-citrulline.</text>
</comment>
<comment type="catalytic activity">
    <reaction evidence="2">
        <text>carbamoyl phosphate + L-ornithine = L-citrulline + phosphate + H(+)</text>
        <dbReference type="Rhea" id="RHEA:19513"/>
        <dbReference type="ChEBI" id="CHEBI:15378"/>
        <dbReference type="ChEBI" id="CHEBI:43474"/>
        <dbReference type="ChEBI" id="CHEBI:46911"/>
        <dbReference type="ChEBI" id="CHEBI:57743"/>
        <dbReference type="ChEBI" id="CHEBI:58228"/>
        <dbReference type="EC" id="2.1.3.3"/>
    </reaction>
</comment>
<comment type="pathway">
    <text evidence="2">Amino-acid biosynthesis; L-arginine biosynthesis; L-arginine from L-ornithine and carbamoyl phosphate: step 1/3.</text>
</comment>
<comment type="subcellular location">
    <subcellularLocation>
        <location evidence="2">Cytoplasm</location>
    </subcellularLocation>
</comment>
<comment type="similarity">
    <text evidence="2">Belongs to the aspartate/ornithine carbamoyltransferase superfamily. OTCase family.</text>
</comment>
<accession>Q07GY2</accession>
<sequence length="312" mass="34503">MSNAPRHFLDLDEMPTKELRAVLDAGVALKAKLKSQKARNTLREKPLEGKTLAMIFERPSTRTRVSFDVGMRQLGGESIMLTGAEMQLGRGETIADTARVLSRYVDAIMIRILNHDALLELAEFATVPVINGLTRRSHPCQVMADLMTFEEHRGPIEGRTIAWTGDDNNVLASWAHAAERFNFTLRIATPPELAPGKPMRDWIKSSGASIVLGTDPEEAVRGADCVLTDTWVSMGDKDGEHRHNLLKPYQVNTQLMSLAKPDALFMHCLPAHRGEEVTDEVIDGPQSVVFDEAENRLHAQKGILAWCFGAVG</sequence>
<feature type="chain" id="PRO_1000065115" description="Ornithine carbamoyltransferase">
    <location>
        <begin position="1"/>
        <end position="312"/>
    </location>
</feature>
<feature type="binding site" evidence="2">
    <location>
        <begin position="60"/>
        <end position="63"/>
    </location>
    <ligand>
        <name>carbamoyl phosphate</name>
        <dbReference type="ChEBI" id="CHEBI:58228"/>
    </ligand>
</feature>
<feature type="binding site" evidence="2">
    <location>
        <position position="87"/>
    </location>
    <ligand>
        <name>carbamoyl phosphate</name>
        <dbReference type="ChEBI" id="CHEBI:58228"/>
    </ligand>
</feature>
<feature type="binding site" evidence="2">
    <location>
        <position position="111"/>
    </location>
    <ligand>
        <name>carbamoyl phosphate</name>
        <dbReference type="ChEBI" id="CHEBI:58228"/>
    </ligand>
</feature>
<feature type="binding site" evidence="2">
    <location>
        <begin position="138"/>
        <end position="141"/>
    </location>
    <ligand>
        <name>carbamoyl phosphate</name>
        <dbReference type="ChEBI" id="CHEBI:58228"/>
    </ligand>
</feature>
<feature type="binding site" evidence="2">
    <location>
        <position position="169"/>
    </location>
    <ligand>
        <name>L-ornithine</name>
        <dbReference type="ChEBI" id="CHEBI:46911"/>
    </ligand>
</feature>
<feature type="binding site" evidence="2">
    <location>
        <position position="229"/>
    </location>
    <ligand>
        <name>L-ornithine</name>
        <dbReference type="ChEBI" id="CHEBI:46911"/>
    </ligand>
</feature>
<feature type="binding site" evidence="2">
    <location>
        <begin position="233"/>
        <end position="234"/>
    </location>
    <ligand>
        <name>L-ornithine</name>
        <dbReference type="ChEBI" id="CHEBI:46911"/>
    </ligand>
</feature>
<feature type="binding site" evidence="2">
    <location>
        <begin position="268"/>
        <end position="269"/>
    </location>
    <ligand>
        <name>carbamoyl phosphate</name>
        <dbReference type="ChEBI" id="CHEBI:58228"/>
    </ligand>
</feature>
<feature type="binding site" evidence="2">
    <location>
        <position position="296"/>
    </location>
    <ligand>
        <name>carbamoyl phosphate</name>
        <dbReference type="ChEBI" id="CHEBI:58228"/>
    </ligand>
</feature>
<dbReference type="EC" id="2.1.3.3" evidence="2"/>
<dbReference type="EMBL" id="CP000463">
    <property type="protein sequence ID" value="ABJ08802.1"/>
    <property type="molecule type" value="Genomic_DNA"/>
</dbReference>
<dbReference type="SMR" id="Q07GY2"/>
<dbReference type="STRING" id="316055.RPE_4883"/>
<dbReference type="KEGG" id="rpe:RPE_4883"/>
<dbReference type="eggNOG" id="COG0078">
    <property type="taxonomic scope" value="Bacteria"/>
</dbReference>
<dbReference type="HOGENOM" id="CLU_043846_3_2_5"/>
<dbReference type="OrthoDB" id="9802587at2"/>
<dbReference type="UniPathway" id="UPA00068">
    <property type="reaction ID" value="UER00112"/>
</dbReference>
<dbReference type="GO" id="GO:0005737">
    <property type="term" value="C:cytoplasm"/>
    <property type="evidence" value="ECO:0007669"/>
    <property type="project" value="UniProtKB-SubCell"/>
</dbReference>
<dbReference type="GO" id="GO:0016597">
    <property type="term" value="F:amino acid binding"/>
    <property type="evidence" value="ECO:0007669"/>
    <property type="project" value="InterPro"/>
</dbReference>
<dbReference type="GO" id="GO:0004585">
    <property type="term" value="F:ornithine carbamoyltransferase activity"/>
    <property type="evidence" value="ECO:0007669"/>
    <property type="project" value="UniProtKB-UniRule"/>
</dbReference>
<dbReference type="GO" id="GO:0042450">
    <property type="term" value="P:arginine biosynthetic process via ornithine"/>
    <property type="evidence" value="ECO:0007669"/>
    <property type="project" value="TreeGrafter"/>
</dbReference>
<dbReference type="GO" id="GO:0019240">
    <property type="term" value="P:citrulline biosynthetic process"/>
    <property type="evidence" value="ECO:0007669"/>
    <property type="project" value="TreeGrafter"/>
</dbReference>
<dbReference type="GO" id="GO:0006526">
    <property type="term" value="P:L-arginine biosynthetic process"/>
    <property type="evidence" value="ECO:0007669"/>
    <property type="project" value="UniProtKB-UniPathway"/>
</dbReference>
<dbReference type="FunFam" id="3.40.50.1370:FF:000008">
    <property type="entry name" value="Ornithine carbamoyltransferase"/>
    <property type="match status" value="1"/>
</dbReference>
<dbReference type="Gene3D" id="3.40.50.1370">
    <property type="entry name" value="Aspartate/ornithine carbamoyltransferase"/>
    <property type="match status" value="2"/>
</dbReference>
<dbReference type="HAMAP" id="MF_01109">
    <property type="entry name" value="OTCase"/>
    <property type="match status" value="1"/>
</dbReference>
<dbReference type="InterPro" id="IPR006132">
    <property type="entry name" value="Asp/Orn_carbamoyltranf_P-bd"/>
</dbReference>
<dbReference type="InterPro" id="IPR006130">
    <property type="entry name" value="Asp/Orn_carbamoylTrfase"/>
</dbReference>
<dbReference type="InterPro" id="IPR036901">
    <property type="entry name" value="Asp/Orn_carbamoylTrfase_sf"/>
</dbReference>
<dbReference type="InterPro" id="IPR006131">
    <property type="entry name" value="Asp_carbamoyltransf_Asp/Orn-bd"/>
</dbReference>
<dbReference type="InterPro" id="IPR002292">
    <property type="entry name" value="Orn/put_carbamltrans"/>
</dbReference>
<dbReference type="InterPro" id="IPR024904">
    <property type="entry name" value="OTCase_ArgI"/>
</dbReference>
<dbReference type="NCBIfam" id="TIGR00658">
    <property type="entry name" value="orni_carb_tr"/>
    <property type="match status" value="1"/>
</dbReference>
<dbReference type="NCBIfam" id="NF001986">
    <property type="entry name" value="PRK00779.1"/>
    <property type="match status" value="1"/>
</dbReference>
<dbReference type="PANTHER" id="PTHR45753">
    <property type="entry name" value="ORNITHINE CARBAMOYLTRANSFERASE, MITOCHONDRIAL"/>
    <property type="match status" value="1"/>
</dbReference>
<dbReference type="PANTHER" id="PTHR45753:SF3">
    <property type="entry name" value="ORNITHINE TRANSCARBAMYLASE, MITOCHONDRIAL"/>
    <property type="match status" value="1"/>
</dbReference>
<dbReference type="Pfam" id="PF00185">
    <property type="entry name" value="OTCace"/>
    <property type="match status" value="1"/>
</dbReference>
<dbReference type="Pfam" id="PF02729">
    <property type="entry name" value="OTCace_N"/>
    <property type="match status" value="1"/>
</dbReference>
<dbReference type="PRINTS" id="PR00100">
    <property type="entry name" value="AOTCASE"/>
</dbReference>
<dbReference type="PRINTS" id="PR00102">
    <property type="entry name" value="OTCASE"/>
</dbReference>
<dbReference type="SUPFAM" id="SSF53671">
    <property type="entry name" value="Aspartate/ornithine carbamoyltransferase"/>
    <property type="match status" value="1"/>
</dbReference>
<gene>
    <name evidence="2" type="primary">argF</name>
    <name type="ordered locus">RPE_4883</name>
</gene>
<organism>
    <name type="scientific">Rhodopseudomonas palustris (strain BisA53)</name>
    <dbReference type="NCBI Taxonomy" id="316055"/>
    <lineage>
        <taxon>Bacteria</taxon>
        <taxon>Pseudomonadati</taxon>
        <taxon>Pseudomonadota</taxon>
        <taxon>Alphaproteobacteria</taxon>
        <taxon>Hyphomicrobiales</taxon>
        <taxon>Nitrobacteraceae</taxon>
        <taxon>Rhodopseudomonas</taxon>
    </lineage>
</organism>
<reference key="1">
    <citation type="submission" date="2006-09" db="EMBL/GenBank/DDBJ databases">
        <title>Complete sequence of Rhodopseudomonas palustris BisA53.</title>
        <authorList>
            <consortium name="US DOE Joint Genome Institute"/>
            <person name="Copeland A."/>
            <person name="Lucas S."/>
            <person name="Lapidus A."/>
            <person name="Barry K."/>
            <person name="Detter J.C."/>
            <person name="Glavina del Rio T."/>
            <person name="Hammon N."/>
            <person name="Israni S."/>
            <person name="Dalin E."/>
            <person name="Tice H."/>
            <person name="Pitluck S."/>
            <person name="Chain P."/>
            <person name="Malfatti S."/>
            <person name="Shin M."/>
            <person name="Vergez L."/>
            <person name="Schmutz J."/>
            <person name="Larimer F."/>
            <person name="Land M."/>
            <person name="Hauser L."/>
            <person name="Pelletier D.A."/>
            <person name="Kyrpides N."/>
            <person name="Kim E."/>
            <person name="Harwood C.S."/>
            <person name="Oda Y."/>
            <person name="Richardson P."/>
        </authorList>
    </citation>
    <scope>NUCLEOTIDE SEQUENCE [LARGE SCALE GENOMIC DNA]</scope>
    <source>
        <strain>BisA53</strain>
    </source>
</reference>
<evidence type="ECO:0000250" key="1"/>
<evidence type="ECO:0000255" key="2">
    <source>
        <dbReference type="HAMAP-Rule" id="MF_01109"/>
    </source>
</evidence>